<comment type="function">
    <text evidence="1">Binds directly to 23S ribosomal RNA and is necessary for the in vitro assembly process of the 50S ribosomal subunit. It is not involved in the protein synthesizing functions of that subunit.</text>
</comment>
<comment type="similarity">
    <text evidence="1">Belongs to the bacterial ribosomal protein bL20 family.</text>
</comment>
<proteinExistence type="inferred from homology"/>
<dbReference type="EMBL" id="CP000555">
    <property type="protein sequence ID" value="ABM94843.1"/>
    <property type="molecule type" value="Genomic_DNA"/>
</dbReference>
<dbReference type="RefSeq" id="WP_011829480.1">
    <property type="nucleotide sequence ID" value="NC_008825.1"/>
</dbReference>
<dbReference type="SMR" id="A2SH04"/>
<dbReference type="STRING" id="420662.Mpe_A1885"/>
<dbReference type="KEGG" id="mpt:Mpe_A1885"/>
<dbReference type="eggNOG" id="COG0292">
    <property type="taxonomic scope" value="Bacteria"/>
</dbReference>
<dbReference type="HOGENOM" id="CLU_123265_0_1_4"/>
<dbReference type="Proteomes" id="UP000000366">
    <property type="component" value="Chromosome"/>
</dbReference>
<dbReference type="GO" id="GO:1990904">
    <property type="term" value="C:ribonucleoprotein complex"/>
    <property type="evidence" value="ECO:0007669"/>
    <property type="project" value="UniProtKB-KW"/>
</dbReference>
<dbReference type="GO" id="GO:0005840">
    <property type="term" value="C:ribosome"/>
    <property type="evidence" value="ECO:0007669"/>
    <property type="project" value="UniProtKB-KW"/>
</dbReference>
<dbReference type="GO" id="GO:0019843">
    <property type="term" value="F:rRNA binding"/>
    <property type="evidence" value="ECO:0007669"/>
    <property type="project" value="UniProtKB-UniRule"/>
</dbReference>
<dbReference type="GO" id="GO:0003735">
    <property type="term" value="F:structural constituent of ribosome"/>
    <property type="evidence" value="ECO:0007669"/>
    <property type="project" value="InterPro"/>
</dbReference>
<dbReference type="GO" id="GO:0000027">
    <property type="term" value="P:ribosomal large subunit assembly"/>
    <property type="evidence" value="ECO:0007669"/>
    <property type="project" value="UniProtKB-UniRule"/>
</dbReference>
<dbReference type="GO" id="GO:0006412">
    <property type="term" value="P:translation"/>
    <property type="evidence" value="ECO:0007669"/>
    <property type="project" value="InterPro"/>
</dbReference>
<dbReference type="CDD" id="cd07026">
    <property type="entry name" value="Ribosomal_L20"/>
    <property type="match status" value="1"/>
</dbReference>
<dbReference type="FunFam" id="1.10.1900.20:FF:000001">
    <property type="entry name" value="50S ribosomal protein L20"/>
    <property type="match status" value="1"/>
</dbReference>
<dbReference type="Gene3D" id="6.10.160.10">
    <property type="match status" value="1"/>
</dbReference>
<dbReference type="Gene3D" id="1.10.1900.20">
    <property type="entry name" value="Ribosomal protein L20"/>
    <property type="match status" value="1"/>
</dbReference>
<dbReference type="HAMAP" id="MF_00382">
    <property type="entry name" value="Ribosomal_bL20"/>
    <property type="match status" value="1"/>
</dbReference>
<dbReference type="InterPro" id="IPR005813">
    <property type="entry name" value="Ribosomal_bL20"/>
</dbReference>
<dbReference type="InterPro" id="IPR049946">
    <property type="entry name" value="RIBOSOMAL_L20_CS"/>
</dbReference>
<dbReference type="InterPro" id="IPR035566">
    <property type="entry name" value="Ribosomal_protein_bL20_C"/>
</dbReference>
<dbReference type="NCBIfam" id="TIGR01032">
    <property type="entry name" value="rplT_bact"/>
    <property type="match status" value="1"/>
</dbReference>
<dbReference type="PANTHER" id="PTHR10986">
    <property type="entry name" value="39S RIBOSOMAL PROTEIN L20"/>
    <property type="match status" value="1"/>
</dbReference>
<dbReference type="Pfam" id="PF00453">
    <property type="entry name" value="Ribosomal_L20"/>
    <property type="match status" value="1"/>
</dbReference>
<dbReference type="PRINTS" id="PR00062">
    <property type="entry name" value="RIBOSOMALL20"/>
</dbReference>
<dbReference type="SUPFAM" id="SSF74731">
    <property type="entry name" value="Ribosomal protein L20"/>
    <property type="match status" value="1"/>
</dbReference>
<dbReference type="PROSITE" id="PS00937">
    <property type="entry name" value="RIBOSOMAL_L20"/>
    <property type="match status" value="1"/>
</dbReference>
<protein>
    <recommendedName>
        <fullName evidence="1">Large ribosomal subunit protein bL20</fullName>
    </recommendedName>
    <alternativeName>
        <fullName evidence="2">50S ribosomal protein L20</fullName>
    </alternativeName>
</protein>
<sequence length="118" mass="13520">MPRVKRGVTARARHKKVLELAKGFRGRRKNVYRIAKQAVMKAGQYAYRDRRNRKRVFRRLWIARINAASRSHGITYSRFIAGIKKAAIDIDRKMLAELAVNDPAAFGSIVEKVKAQLA</sequence>
<evidence type="ECO:0000255" key="1">
    <source>
        <dbReference type="HAMAP-Rule" id="MF_00382"/>
    </source>
</evidence>
<evidence type="ECO:0000305" key="2"/>
<gene>
    <name evidence="1" type="primary">rplT</name>
    <name type="ordered locus">Mpe_A1885</name>
</gene>
<organism>
    <name type="scientific">Methylibium petroleiphilum (strain ATCC BAA-1232 / LMG 22953 / PM1)</name>
    <dbReference type="NCBI Taxonomy" id="420662"/>
    <lineage>
        <taxon>Bacteria</taxon>
        <taxon>Pseudomonadati</taxon>
        <taxon>Pseudomonadota</taxon>
        <taxon>Betaproteobacteria</taxon>
        <taxon>Burkholderiales</taxon>
        <taxon>Sphaerotilaceae</taxon>
        <taxon>Methylibium</taxon>
    </lineage>
</organism>
<name>RL20_METPP</name>
<accession>A2SH04</accession>
<feature type="chain" id="PRO_1000049010" description="Large ribosomal subunit protein bL20">
    <location>
        <begin position="1"/>
        <end position="118"/>
    </location>
</feature>
<reference key="1">
    <citation type="journal article" date="2007" name="J. Bacteriol.">
        <title>Whole-genome analysis of the methyl tert-butyl ether-degrading beta-proteobacterium Methylibium petroleiphilum PM1.</title>
        <authorList>
            <person name="Kane S.R."/>
            <person name="Chakicherla A.Y."/>
            <person name="Chain P.S.G."/>
            <person name="Schmidt R."/>
            <person name="Shin M.W."/>
            <person name="Legler T.C."/>
            <person name="Scow K.M."/>
            <person name="Larimer F.W."/>
            <person name="Lucas S.M."/>
            <person name="Richardson P.M."/>
            <person name="Hristova K.R."/>
        </authorList>
    </citation>
    <scope>NUCLEOTIDE SEQUENCE [LARGE SCALE GENOMIC DNA]</scope>
    <source>
        <strain>ATCC BAA-1232 / LMG 22953 / PM1</strain>
    </source>
</reference>
<keyword id="KW-1185">Reference proteome</keyword>
<keyword id="KW-0687">Ribonucleoprotein</keyword>
<keyword id="KW-0689">Ribosomal protein</keyword>
<keyword id="KW-0694">RNA-binding</keyword>
<keyword id="KW-0699">rRNA-binding</keyword>